<organism>
    <name type="scientific">Opistophthalmus carinatus</name>
    <name type="common">African yellow leg scorpion</name>
    <dbReference type="NCBI Taxonomy" id="190115"/>
    <lineage>
        <taxon>Eukaryota</taxon>
        <taxon>Metazoa</taxon>
        <taxon>Ecdysozoa</taxon>
        <taxon>Arthropoda</taxon>
        <taxon>Chelicerata</taxon>
        <taxon>Arachnida</taxon>
        <taxon>Scorpiones</taxon>
        <taxon>Iurida</taxon>
        <taxon>Scorpionoidea</taxon>
        <taxon>Scorpionidae</taxon>
        <taxon>Opistophthalminae</taxon>
        <taxon>Opistophthalmus</taxon>
    </lineage>
</organism>
<feature type="signal peptide" evidence="2">
    <location>
        <begin position="1"/>
        <end position="19"/>
    </location>
</feature>
<feature type="chain" id="PRO_5000092276" description="Opiscorpine-3" evidence="6">
    <location>
        <begin position="20"/>
        <end position="95"/>
    </location>
</feature>
<feature type="domain" description="BetaSPN-type CS-alpha/beta" evidence="3">
    <location>
        <begin position="55"/>
        <end position="95"/>
    </location>
</feature>
<feature type="disulfide bond" evidence="3">
    <location>
        <begin position="58"/>
        <end position="82"/>
    </location>
</feature>
<feature type="disulfide bond" evidence="3">
    <location>
        <begin position="68"/>
        <end position="87"/>
    </location>
</feature>
<feature type="disulfide bond" evidence="3">
    <location>
        <begin position="72"/>
        <end position="89"/>
    </location>
</feature>
<proteinExistence type="inferred from homology"/>
<comment type="function">
    <text evidence="1">Has antimicrobial activity against yeasts and bacteria.</text>
</comment>
<comment type="subcellular location">
    <subcellularLocation>
        <location evidence="6">Secreted</location>
    </subcellularLocation>
</comment>
<comment type="tissue specificity">
    <text evidence="6">Expressed by the venom gland.</text>
</comment>
<comment type="similarity">
    <text evidence="5">Belongs to the long chain scorpion toxin family. Class 3 subfamily.</text>
</comment>
<accession>Q5WQZ7</accession>
<evidence type="ECO:0000250" key="1">
    <source>
        <dbReference type="UniProtKB" id="Q5WR03"/>
    </source>
</evidence>
<evidence type="ECO:0000255" key="2"/>
<evidence type="ECO:0000255" key="3">
    <source>
        <dbReference type="PROSITE-ProRule" id="PRU01209"/>
    </source>
</evidence>
<evidence type="ECO:0000303" key="4">
    <source>
    </source>
</evidence>
<evidence type="ECO:0000305" key="5"/>
<evidence type="ECO:0000305" key="6">
    <source>
    </source>
</evidence>
<sequence length="95" mass="10383">MNNKLTALIFLGLLAIASCKWLNEKSIQNKIDEKIGKNFLGGMAKAVVHKLAKNEFMCVANVDMTKSCDTHCQKASGEKGYCHGTKCKCGVPLSY</sequence>
<protein>
    <recommendedName>
        <fullName evidence="4">Opiscorpine-3</fullName>
    </recommendedName>
</protein>
<dbReference type="EMBL" id="AY423487">
    <property type="protein sequence ID" value="AAQ94358.1"/>
    <property type="molecule type" value="Genomic_DNA"/>
</dbReference>
<dbReference type="EMBL" id="AY423484">
    <property type="protein sequence ID" value="AAQ94355.1"/>
    <property type="molecule type" value="mRNA"/>
</dbReference>
<dbReference type="SMR" id="Q5WQZ7"/>
<dbReference type="GO" id="GO:0005576">
    <property type="term" value="C:extracellular region"/>
    <property type="evidence" value="ECO:0007669"/>
    <property type="project" value="UniProtKB-SubCell"/>
</dbReference>
<dbReference type="GO" id="GO:0090729">
    <property type="term" value="F:toxin activity"/>
    <property type="evidence" value="ECO:0007669"/>
    <property type="project" value="UniProtKB-KW"/>
</dbReference>
<dbReference type="GO" id="GO:0042742">
    <property type="term" value="P:defense response to bacterium"/>
    <property type="evidence" value="ECO:0007669"/>
    <property type="project" value="UniProtKB-KW"/>
</dbReference>
<dbReference type="GO" id="GO:0050832">
    <property type="term" value="P:defense response to fungus"/>
    <property type="evidence" value="ECO:0007669"/>
    <property type="project" value="UniProtKB-KW"/>
</dbReference>
<dbReference type="GO" id="GO:0031640">
    <property type="term" value="P:killing of cells of another organism"/>
    <property type="evidence" value="ECO:0007669"/>
    <property type="project" value="UniProtKB-KW"/>
</dbReference>
<dbReference type="InterPro" id="IPR029237">
    <property type="entry name" value="Long_scorpion_toxin_alpha/beta"/>
</dbReference>
<dbReference type="InterPro" id="IPR036574">
    <property type="entry name" value="Scorpion_toxin-like_sf"/>
</dbReference>
<dbReference type="Pfam" id="PF14866">
    <property type="entry name" value="Scorpion_toxin_alpha-beta"/>
    <property type="match status" value="1"/>
</dbReference>
<dbReference type="SUPFAM" id="SSF57095">
    <property type="entry name" value="Scorpion toxin-like"/>
    <property type="match status" value="1"/>
</dbReference>
<dbReference type="PROSITE" id="PS51862">
    <property type="entry name" value="BSPN_CSAB"/>
    <property type="match status" value="1"/>
</dbReference>
<keyword id="KW-0044">Antibiotic</keyword>
<keyword id="KW-0929">Antimicrobial</keyword>
<keyword id="KW-1015">Disulfide bond</keyword>
<keyword id="KW-0295">Fungicide</keyword>
<keyword id="KW-0964">Secreted</keyword>
<keyword id="KW-0732">Signal</keyword>
<keyword id="KW-0800">Toxin</keyword>
<name>KBX33_OPICA</name>
<reference key="1">
    <citation type="journal article" date="2004" name="Cell. Mol. Life Sci.">
        <title>The scorpine family of defensins: gene structure, alternative polyadenylation and fold recognition.</title>
        <authorList>
            <person name="Zhu S."/>
            <person name="Tytgat J."/>
        </authorList>
    </citation>
    <scope>NUCLEOTIDE SEQUENCE [GENOMIC DNA / MRNA]</scope>
    <source>
        <tissue>Venom gland</tissue>
    </source>
</reference>